<gene>
    <name evidence="1" type="primary">rplX</name>
    <name type="ordered locus">Arad_1986</name>
</gene>
<keyword id="KW-0687">Ribonucleoprotein</keyword>
<keyword id="KW-0689">Ribosomal protein</keyword>
<keyword id="KW-0694">RNA-binding</keyword>
<keyword id="KW-0699">rRNA-binding</keyword>
<name>RL24_RHIR8</name>
<dbReference type="EMBL" id="CP000628">
    <property type="protein sequence ID" value="ACM26290.1"/>
    <property type="molecule type" value="Genomic_DNA"/>
</dbReference>
<dbReference type="RefSeq" id="WP_007690770.1">
    <property type="nucleotide sequence ID" value="NC_011985.1"/>
</dbReference>
<dbReference type="SMR" id="B9JDT9"/>
<dbReference type="STRING" id="311403.Arad_1986"/>
<dbReference type="GeneID" id="86848178"/>
<dbReference type="KEGG" id="ara:Arad_1986"/>
<dbReference type="eggNOG" id="COG0198">
    <property type="taxonomic scope" value="Bacteria"/>
</dbReference>
<dbReference type="HOGENOM" id="CLU_093315_2_2_5"/>
<dbReference type="Proteomes" id="UP000001600">
    <property type="component" value="Chromosome 1"/>
</dbReference>
<dbReference type="GO" id="GO:1990904">
    <property type="term" value="C:ribonucleoprotein complex"/>
    <property type="evidence" value="ECO:0007669"/>
    <property type="project" value="UniProtKB-KW"/>
</dbReference>
<dbReference type="GO" id="GO:0005840">
    <property type="term" value="C:ribosome"/>
    <property type="evidence" value="ECO:0007669"/>
    <property type="project" value="UniProtKB-KW"/>
</dbReference>
<dbReference type="GO" id="GO:0019843">
    <property type="term" value="F:rRNA binding"/>
    <property type="evidence" value="ECO:0007669"/>
    <property type="project" value="UniProtKB-UniRule"/>
</dbReference>
<dbReference type="GO" id="GO:0003735">
    <property type="term" value="F:structural constituent of ribosome"/>
    <property type="evidence" value="ECO:0007669"/>
    <property type="project" value="InterPro"/>
</dbReference>
<dbReference type="GO" id="GO:0006412">
    <property type="term" value="P:translation"/>
    <property type="evidence" value="ECO:0007669"/>
    <property type="project" value="UniProtKB-UniRule"/>
</dbReference>
<dbReference type="CDD" id="cd06089">
    <property type="entry name" value="KOW_RPL26"/>
    <property type="match status" value="1"/>
</dbReference>
<dbReference type="FunFam" id="2.30.30.30:FF:000004">
    <property type="entry name" value="50S ribosomal protein L24"/>
    <property type="match status" value="1"/>
</dbReference>
<dbReference type="Gene3D" id="2.30.30.30">
    <property type="match status" value="1"/>
</dbReference>
<dbReference type="HAMAP" id="MF_01326_B">
    <property type="entry name" value="Ribosomal_uL24_B"/>
    <property type="match status" value="1"/>
</dbReference>
<dbReference type="InterPro" id="IPR005824">
    <property type="entry name" value="KOW"/>
</dbReference>
<dbReference type="InterPro" id="IPR014722">
    <property type="entry name" value="Rib_uL2_dom2"/>
</dbReference>
<dbReference type="InterPro" id="IPR003256">
    <property type="entry name" value="Ribosomal_uL24"/>
</dbReference>
<dbReference type="InterPro" id="IPR005825">
    <property type="entry name" value="Ribosomal_uL24_CS"/>
</dbReference>
<dbReference type="InterPro" id="IPR041988">
    <property type="entry name" value="Ribosomal_uL24_KOW"/>
</dbReference>
<dbReference type="InterPro" id="IPR008991">
    <property type="entry name" value="Translation_prot_SH3-like_sf"/>
</dbReference>
<dbReference type="NCBIfam" id="TIGR01079">
    <property type="entry name" value="rplX_bact"/>
    <property type="match status" value="1"/>
</dbReference>
<dbReference type="PANTHER" id="PTHR12903">
    <property type="entry name" value="MITOCHONDRIAL RIBOSOMAL PROTEIN L24"/>
    <property type="match status" value="1"/>
</dbReference>
<dbReference type="Pfam" id="PF00467">
    <property type="entry name" value="KOW"/>
    <property type="match status" value="1"/>
</dbReference>
<dbReference type="Pfam" id="PF17136">
    <property type="entry name" value="ribosomal_L24"/>
    <property type="match status" value="1"/>
</dbReference>
<dbReference type="SMART" id="SM00739">
    <property type="entry name" value="KOW"/>
    <property type="match status" value="1"/>
</dbReference>
<dbReference type="SUPFAM" id="SSF50104">
    <property type="entry name" value="Translation proteins SH3-like domain"/>
    <property type="match status" value="1"/>
</dbReference>
<dbReference type="PROSITE" id="PS01108">
    <property type="entry name" value="RIBOSOMAL_L24"/>
    <property type="match status" value="1"/>
</dbReference>
<accession>B9JDT9</accession>
<organism>
    <name type="scientific">Rhizobium rhizogenes (strain K84 / ATCC BAA-868)</name>
    <name type="common">Agrobacterium radiobacter</name>
    <dbReference type="NCBI Taxonomy" id="311403"/>
    <lineage>
        <taxon>Bacteria</taxon>
        <taxon>Pseudomonadati</taxon>
        <taxon>Pseudomonadota</taxon>
        <taxon>Alphaproteobacteria</taxon>
        <taxon>Hyphomicrobiales</taxon>
        <taxon>Rhizobiaceae</taxon>
        <taxon>Rhizobium/Agrobacterium group</taxon>
        <taxon>Rhizobium</taxon>
    </lineage>
</organism>
<feature type="chain" id="PRO_1000165918" description="Large ribosomal subunit protein uL24">
    <location>
        <begin position="1"/>
        <end position="102"/>
    </location>
</feature>
<reference key="1">
    <citation type="journal article" date="2009" name="J. Bacteriol.">
        <title>Genome sequences of three Agrobacterium biovars help elucidate the evolution of multichromosome genomes in bacteria.</title>
        <authorList>
            <person name="Slater S.C."/>
            <person name="Goldman B.S."/>
            <person name="Goodner B."/>
            <person name="Setubal J.C."/>
            <person name="Farrand S.K."/>
            <person name="Nester E.W."/>
            <person name="Burr T.J."/>
            <person name="Banta L."/>
            <person name="Dickerman A.W."/>
            <person name="Paulsen I."/>
            <person name="Otten L."/>
            <person name="Suen G."/>
            <person name="Welch R."/>
            <person name="Almeida N.F."/>
            <person name="Arnold F."/>
            <person name="Burton O.T."/>
            <person name="Du Z."/>
            <person name="Ewing A."/>
            <person name="Godsy E."/>
            <person name="Heisel S."/>
            <person name="Houmiel K.L."/>
            <person name="Jhaveri J."/>
            <person name="Lu J."/>
            <person name="Miller N.M."/>
            <person name="Norton S."/>
            <person name="Chen Q."/>
            <person name="Phoolcharoen W."/>
            <person name="Ohlin V."/>
            <person name="Ondrusek D."/>
            <person name="Pride N."/>
            <person name="Stricklin S.L."/>
            <person name="Sun J."/>
            <person name="Wheeler C."/>
            <person name="Wilson L."/>
            <person name="Zhu H."/>
            <person name="Wood D.W."/>
        </authorList>
    </citation>
    <scope>NUCLEOTIDE SEQUENCE [LARGE SCALE GENOMIC DNA]</scope>
    <source>
        <strain>K84 / ATCC BAA-868</strain>
    </source>
</reference>
<proteinExistence type="inferred from homology"/>
<protein>
    <recommendedName>
        <fullName evidence="1">Large ribosomal subunit protein uL24</fullName>
    </recommendedName>
    <alternativeName>
        <fullName evidence="2">50S ribosomal protein L24</fullName>
    </alternativeName>
</protein>
<evidence type="ECO:0000255" key="1">
    <source>
        <dbReference type="HAMAP-Rule" id="MF_01326"/>
    </source>
</evidence>
<evidence type="ECO:0000305" key="2"/>
<comment type="function">
    <text evidence="1">One of two assembly initiator proteins, it binds directly to the 5'-end of the 23S rRNA, where it nucleates assembly of the 50S subunit.</text>
</comment>
<comment type="function">
    <text evidence="1">One of the proteins that surrounds the polypeptide exit tunnel on the outside of the subunit.</text>
</comment>
<comment type="subunit">
    <text evidence="1">Part of the 50S ribosomal subunit.</text>
</comment>
<comment type="similarity">
    <text evidence="1">Belongs to the universal ribosomal protein uL24 family.</text>
</comment>
<sequence length="102" mass="11141">MQKIRKGDKVVVLAGKDKGRTGEVIQVMPKEDRAVVRGVNVIKRHQRQTQTQEAGIISKEASLHLSNLAIVDKDGKPTRVGFKVVEGKKVRVAKTSGEVIDG</sequence>